<proteinExistence type="inferred from homology"/>
<feature type="chain" id="PRO_1000001877" description="Glutamate--tRNA ligase">
    <location>
        <begin position="1"/>
        <end position="474"/>
    </location>
</feature>
<feature type="short sequence motif" description="'HIGH' region" evidence="1">
    <location>
        <begin position="9"/>
        <end position="19"/>
    </location>
</feature>
<feature type="short sequence motif" description="'KMSKS' region" evidence="1">
    <location>
        <begin position="238"/>
        <end position="242"/>
    </location>
</feature>
<feature type="binding site" evidence="1">
    <location>
        <position position="241"/>
    </location>
    <ligand>
        <name>ATP</name>
        <dbReference type="ChEBI" id="CHEBI:30616"/>
    </ligand>
</feature>
<evidence type="ECO:0000255" key="1">
    <source>
        <dbReference type="HAMAP-Rule" id="MF_00022"/>
    </source>
</evidence>
<organism>
    <name type="scientific">Buchnera aphidicola subsp. Cinara cedri (strain Cc)</name>
    <dbReference type="NCBI Taxonomy" id="372461"/>
    <lineage>
        <taxon>Bacteria</taxon>
        <taxon>Pseudomonadati</taxon>
        <taxon>Pseudomonadota</taxon>
        <taxon>Gammaproteobacteria</taxon>
        <taxon>Enterobacterales</taxon>
        <taxon>Erwiniaceae</taxon>
        <taxon>Buchnera</taxon>
    </lineage>
</organism>
<dbReference type="EC" id="6.1.1.17" evidence="1"/>
<dbReference type="EMBL" id="CP000263">
    <property type="protein sequence ID" value="ABJ90521.1"/>
    <property type="molecule type" value="Genomic_DNA"/>
</dbReference>
<dbReference type="RefSeq" id="WP_011672440.1">
    <property type="nucleotide sequence ID" value="NC_008513.1"/>
</dbReference>
<dbReference type="SMR" id="Q058C8"/>
<dbReference type="STRING" id="372461.BCc_042"/>
<dbReference type="KEGG" id="bcc:BCc_042"/>
<dbReference type="eggNOG" id="COG0008">
    <property type="taxonomic scope" value="Bacteria"/>
</dbReference>
<dbReference type="HOGENOM" id="CLU_015768_6_0_6"/>
<dbReference type="OrthoDB" id="9807503at2"/>
<dbReference type="Proteomes" id="UP000000669">
    <property type="component" value="Chromosome"/>
</dbReference>
<dbReference type="GO" id="GO:0005829">
    <property type="term" value="C:cytosol"/>
    <property type="evidence" value="ECO:0007669"/>
    <property type="project" value="TreeGrafter"/>
</dbReference>
<dbReference type="GO" id="GO:0005524">
    <property type="term" value="F:ATP binding"/>
    <property type="evidence" value="ECO:0007669"/>
    <property type="project" value="UniProtKB-UniRule"/>
</dbReference>
<dbReference type="GO" id="GO:0004818">
    <property type="term" value="F:glutamate-tRNA ligase activity"/>
    <property type="evidence" value="ECO:0007669"/>
    <property type="project" value="UniProtKB-UniRule"/>
</dbReference>
<dbReference type="GO" id="GO:0000049">
    <property type="term" value="F:tRNA binding"/>
    <property type="evidence" value="ECO:0007669"/>
    <property type="project" value="InterPro"/>
</dbReference>
<dbReference type="GO" id="GO:0008270">
    <property type="term" value="F:zinc ion binding"/>
    <property type="evidence" value="ECO:0007669"/>
    <property type="project" value="InterPro"/>
</dbReference>
<dbReference type="GO" id="GO:0006424">
    <property type="term" value="P:glutamyl-tRNA aminoacylation"/>
    <property type="evidence" value="ECO:0007669"/>
    <property type="project" value="UniProtKB-UniRule"/>
</dbReference>
<dbReference type="CDD" id="cd00808">
    <property type="entry name" value="GluRS_core"/>
    <property type="match status" value="1"/>
</dbReference>
<dbReference type="FunFam" id="3.40.50.620:FF:000007">
    <property type="entry name" value="Glutamate--tRNA ligase"/>
    <property type="match status" value="1"/>
</dbReference>
<dbReference type="Gene3D" id="1.10.10.350">
    <property type="match status" value="1"/>
</dbReference>
<dbReference type="Gene3D" id="3.40.50.620">
    <property type="entry name" value="HUPs"/>
    <property type="match status" value="1"/>
</dbReference>
<dbReference type="HAMAP" id="MF_00022">
    <property type="entry name" value="Glu_tRNA_synth_type1"/>
    <property type="match status" value="1"/>
</dbReference>
<dbReference type="InterPro" id="IPR045462">
    <property type="entry name" value="aa-tRNA-synth_I_cd-bd"/>
</dbReference>
<dbReference type="InterPro" id="IPR020751">
    <property type="entry name" value="aa-tRNA-synth_I_codon-bd_sub2"/>
</dbReference>
<dbReference type="InterPro" id="IPR001412">
    <property type="entry name" value="aa-tRNA-synth_I_CS"/>
</dbReference>
<dbReference type="InterPro" id="IPR008925">
    <property type="entry name" value="aa_tRNA-synth_I_cd-bd_sf"/>
</dbReference>
<dbReference type="InterPro" id="IPR004527">
    <property type="entry name" value="Glu-tRNA-ligase_bac/mito"/>
</dbReference>
<dbReference type="InterPro" id="IPR000924">
    <property type="entry name" value="Glu/Gln-tRNA-synth"/>
</dbReference>
<dbReference type="InterPro" id="IPR020058">
    <property type="entry name" value="Glu/Gln-tRNA-synth_Ib_cat-dom"/>
</dbReference>
<dbReference type="InterPro" id="IPR049940">
    <property type="entry name" value="GluQ/Sye"/>
</dbReference>
<dbReference type="InterPro" id="IPR033910">
    <property type="entry name" value="GluRS_core"/>
</dbReference>
<dbReference type="InterPro" id="IPR014729">
    <property type="entry name" value="Rossmann-like_a/b/a_fold"/>
</dbReference>
<dbReference type="NCBIfam" id="TIGR00464">
    <property type="entry name" value="gltX_bact"/>
    <property type="match status" value="1"/>
</dbReference>
<dbReference type="PANTHER" id="PTHR43311">
    <property type="entry name" value="GLUTAMATE--TRNA LIGASE"/>
    <property type="match status" value="1"/>
</dbReference>
<dbReference type="PANTHER" id="PTHR43311:SF2">
    <property type="entry name" value="GLUTAMATE--TRNA LIGASE, MITOCHONDRIAL-RELATED"/>
    <property type="match status" value="1"/>
</dbReference>
<dbReference type="Pfam" id="PF19269">
    <property type="entry name" value="Anticodon_2"/>
    <property type="match status" value="1"/>
</dbReference>
<dbReference type="Pfam" id="PF00749">
    <property type="entry name" value="tRNA-synt_1c"/>
    <property type="match status" value="1"/>
</dbReference>
<dbReference type="PRINTS" id="PR00987">
    <property type="entry name" value="TRNASYNTHGLU"/>
</dbReference>
<dbReference type="SUPFAM" id="SSF48163">
    <property type="entry name" value="An anticodon-binding domain of class I aminoacyl-tRNA synthetases"/>
    <property type="match status" value="1"/>
</dbReference>
<dbReference type="SUPFAM" id="SSF52374">
    <property type="entry name" value="Nucleotidylyl transferase"/>
    <property type="match status" value="1"/>
</dbReference>
<dbReference type="PROSITE" id="PS00178">
    <property type="entry name" value="AA_TRNA_LIGASE_I"/>
    <property type="match status" value="1"/>
</dbReference>
<protein>
    <recommendedName>
        <fullName evidence="1">Glutamate--tRNA ligase</fullName>
        <ecNumber evidence="1">6.1.1.17</ecNumber>
    </recommendedName>
    <alternativeName>
        <fullName evidence="1">Glutamyl-tRNA synthetase</fullName>
        <shortName evidence="1">GluRS</shortName>
    </alternativeName>
</protein>
<reference key="1">
    <citation type="journal article" date="2006" name="Science">
        <title>A small microbial genome: the end of a long symbiotic relationship?</title>
        <authorList>
            <person name="Perez-Brocal V."/>
            <person name="Gil R."/>
            <person name="Ramos S."/>
            <person name="Lamelas A."/>
            <person name="Postigo M."/>
            <person name="Michelena J.M."/>
            <person name="Silva F.J."/>
            <person name="Moya A."/>
            <person name="Latorre A."/>
        </authorList>
    </citation>
    <scope>NUCLEOTIDE SEQUENCE [LARGE SCALE GENOMIC DNA]</scope>
    <source>
        <strain>Cc</strain>
    </source>
</reference>
<accession>Q058C8</accession>
<gene>
    <name evidence="1" type="primary">gltX</name>
    <name type="ordered locus">BCc_042</name>
</gene>
<keyword id="KW-0030">Aminoacyl-tRNA synthetase</keyword>
<keyword id="KW-0067">ATP-binding</keyword>
<keyword id="KW-0963">Cytoplasm</keyword>
<keyword id="KW-0436">Ligase</keyword>
<keyword id="KW-0547">Nucleotide-binding</keyword>
<keyword id="KW-0648">Protein biosynthesis</keyword>
<keyword id="KW-1185">Reference proteome</keyword>
<name>SYE_BUCCC</name>
<sequence>MKIKTRFSPSPTGLLHMGGVRTALYSWLFARKNNGSFILRIEDTDKNRVKNNSVQDILYGLRYLQLNWDEGPFFQSNRINIYKNIILFMLKKGIAYKCYCSKNRLDKLRKNQILNKKKPKYDNKCRNKNFFLKKSNIPYVIRFKNPTKGLVEFRDMIRGKISISNKELDDLVIQRSNGMPTYNFCVVVDDWQMNITHIIRGEDHIHNTPRQINLLSSLNAYIPQYAHTSMILDKKRKKLSKRCSSYSIINYINNGFIPEAILNYALQLGWSYKNQEIFSINEMKNIFNIKYINKSPSIIDKKKFLWFNHYYLNNISFNLKYKYFFSYCKKNNIFFDKDVNISGVIKDFLGRHSTFKDFIQTYDYFYKEINISNIKNIYLYNKLINITILKFLYKKFNLLNNWDLKNILLIIKESILYFKISFKEIAILIRIVITGKKQTPSISSIIFYIGKKKFLLRIKNFLKYLQLNNSNFSK</sequence>
<comment type="function">
    <text evidence="1">Catalyzes the attachment of glutamate to tRNA(Glu) in a two-step reaction: glutamate is first activated by ATP to form Glu-AMP and then transferred to the acceptor end of tRNA(Glu).</text>
</comment>
<comment type="catalytic activity">
    <reaction evidence="1">
        <text>tRNA(Glu) + L-glutamate + ATP = L-glutamyl-tRNA(Glu) + AMP + diphosphate</text>
        <dbReference type="Rhea" id="RHEA:23540"/>
        <dbReference type="Rhea" id="RHEA-COMP:9663"/>
        <dbReference type="Rhea" id="RHEA-COMP:9680"/>
        <dbReference type="ChEBI" id="CHEBI:29985"/>
        <dbReference type="ChEBI" id="CHEBI:30616"/>
        <dbReference type="ChEBI" id="CHEBI:33019"/>
        <dbReference type="ChEBI" id="CHEBI:78442"/>
        <dbReference type="ChEBI" id="CHEBI:78520"/>
        <dbReference type="ChEBI" id="CHEBI:456215"/>
        <dbReference type="EC" id="6.1.1.17"/>
    </reaction>
</comment>
<comment type="subunit">
    <text evidence="1">Monomer.</text>
</comment>
<comment type="subcellular location">
    <subcellularLocation>
        <location evidence="1">Cytoplasm</location>
    </subcellularLocation>
</comment>
<comment type="similarity">
    <text evidence="1">Belongs to the class-I aminoacyl-tRNA synthetase family. Glutamate--tRNA ligase type 1 subfamily.</text>
</comment>